<reference key="1">
    <citation type="submission" date="1996-03" db="EMBL/GenBank/DDBJ databases">
        <authorList>
            <person name="Krogh S."/>
            <person name="O'Reilly M."/>
            <person name="Nolan N."/>
            <person name="Devine K.M."/>
        </authorList>
    </citation>
    <scope>NUCLEOTIDE SEQUENCE [GENOMIC DNA]</scope>
    <source>
        <strain>168</strain>
    </source>
</reference>
<reference key="2">
    <citation type="journal article" date="1997" name="Nature">
        <title>The complete genome sequence of the Gram-positive bacterium Bacillus subtilis.</title>
        <authorList>
            <person name="Kunst F."/>
            <person name="Ogasawara N."/>
            <person name="Moszer I."/>
            <person name="Albertini A.M."/>
            <person name="Alloni G."/>
            <person name="Azevedo V."/>
            <person name="Bertero M.G."/>
            <person name="Bessieres P."/>
            <person name="Bolotin A."/>
            <person name="Borchert S."/>
            <person name="Borriss R."/>
            <person name="Boursier L."/>
            <person name="Brans A."/>
            <person name="Braun M."/>
            <person name="Brignell S.C."/>
            <person name="Bron S."/>
            <person name="Brouillet S."/>
            <person name="Bruschi C.V."/>
            <person name="Caldwell B."/>
            <person name="Capuano V."/>
            <person name="Carter N.M."/>
            <person name="Choi S.-K."/>
            <person name="Codani J.-J."/>
            <person name="Connerton I.F."/>
            <person name="Cummings N.J."/>
            <person name="Daniel R.A."/>
            <person name="Denizot F."/>
            <person name="Devine K.M."/>
            <person name="Duesterhoeft A."/>
            <person name="Ehrlich S.D."/>
            <person name="Emmerson P.T."/>
            <person name="Entian K.-D."/>
            <person name="Errington J."/>
            <person name="Fabret C."/>
            <person name="Ferrari E."/>
            <person name="Foulger D."/>
            <person name="Fritz C."/>
            <person name="Fujita M."/>
            <person name="Fujita Y."/>
            <person name="Fuma S."/>
            <person name="Galizzi A."/>
            <person name="Galleron N."/>
            <person name="Ghim S.-Y."/>
            <person name="Glaser P."/>
            <person name="Goffeau A."/>
            <person name="Golightly E.J."/>
            <person name="Grandi G."/>
            <person name="Guiseppi G."/>
            <person name="Guy B.J."/>
            <person name="Haga K."/>
            <person name="Haiech J."/>
            <person name="Harwood C.R."/>
            <person name="Henaut A."/>
            <person name="Hilbert H."/>
            <person name="Holsappel S."/>
            <person name="Hosono S."/>
            <person name="Hullo M.-F."/>
            <person name="Itaya M."/>
            <person name="Jones L.-M."/>
            <person name="Joris B."/>
            <person name="Karamata D."/>
            <person name="Kasahara Y."/>
            <person name="Klaerr-Blanchard M."/>
            <person name="Klein C."/>
            <person name="Kobayashi Y."/>
            <person name="Koetter P."/>
            <person name="Koningstein G."/>
            <person name="Krogh S."/>
            <person name="Kumano M."/>
            <person name="Kurita K."/>
            <person name="Lapidus A."/>
            <person name="Lardinois S."/>
            <person name="Lauber J."/>
            <person name="Lazarevic V."/>
            <person name="Lee S.-M."/>
            <person name="Levine A."/>
            <person name="Liu H."/>
            <person name="Masuda S."/>
            <person name="Mauel C."/>
            <person name="Medigue C."/>
            <person name="Medina N."/>
            <person name="Mellado R.P."/>
            <person name="Mizuno M."/>
            <person name="Moestl D."/>
            <person name="Nakai S."/>
            <person name="Noback M."/>
            <person name="Noone D."/>
            <person name="O'Reilly M."/>
            <person name="Ogawa K."/>
            <person name="Ogiwara A."/>
            <person name="Oudega B."/>
            <person name="Park S.-H."/>
            <person name="Parro V."/>
            <person name="Pohl T.M."/>
            <person name="Portetelle D."/>
            <person name="Porwollik S."/>
            <person name="Prescott A.M."/>
            <person name="Presecan E."/>
            <person name="Pujic P."/>
            <person name="Purnelle B."/>
            <person name="Rapoport G."/>
            <person name="Rey M."/>
            <person name="Reynolds S."/>
            <person name="Rieger M."/>
            <person name="Rivolta C."/>
            <person name="Rocha E."/>
            <person name="Roche B."/>
            <person name="Rose M."/>
            <person name="Sadaie Y."/>
            <person name="Sato T."/>
            <person name="Scanlan E."/>
            <person name="Schleich S."/>
            <person name="Schroeter R."/>
            <person name="Scoffone F."/>
            <person name="Sekiguchi J."/>
            <person name="Sekowska A."/>
            <person name="Seror S.J."/>
            <person name="Serror P."/>
            <person name="Shin B.-S."/>
            <person name="Soldo B."/>
            <person name="Sorokin A."/>
            <person name="Tacconi E."/>
            <person name="Takagi T."/>
            <person name="Takahashi H."/>
            <person name="Takemaru K."/>
            <person name="Takeuchi M."/>
            <person name="Tamakoshi A."/>
            <person name="Tanaka T."/>
            <person name="Terpstra P."/>
            <person name="Tognoni A."/>
            <person name="Tosato V."/>
            <person name="Uchiyama S."/>
            <person name="Vandenbol M."/>
            <person name="Vannier F."/>
            <person name="Vassarotti A."/>
            <person name="Viari A."/>
            <person name="Wambutt R."/>
            <person name="Wedler E."/>
            <person name="Wedler H."/>
            <person name="Weitzenegger T."/>
            <person name="Winters P."/>
            <person name="Wipat A."/>
            <person name="Yamamoto H."/>
            <person name="Yamane K."/>
            <person name="Yasumoto K."/>
            <person name="Yata K."/>
            <person name="Yoshida K."/>
            <person name="Yoshikawa H.-F."/>
            <person name="Zumstein E."/>
            <person name="Yoshikawa H."/>
            <person name="Danchin A."/>
        </authorList>
    </citation>
    <scope>NUCLEOTIDE SEQUENCE [LARGE SCALE GENOMIC DNA]</scope>
    <source>
        <strain>168</strain>
    </source>
</reference>
<protein>
    <recommendedName>
        <fullName>Phage-like element PBSX protein XkdI</fullName>
    </recommendedName>
</protein>
<accession>P54329</accession>
<name>XKDI_BACSU</name>
<dbReference type="EMBL" id="Z70177">
    <property type="protein sequence ID" value="CAA94064.1"/>
    <property type="molecule type" value="Genomic_DNA"/>
</dbReference>
<dbReference type="EMBL" id="AL009126">
    <property type="protein sequence ID" value="CAB13120.1"/>
    <property type="molecule type" value="Genomic_DNA"/>
</dbReference>
<dbReference type="PIR" id="A69732">
    <property type="entry name" value="A69732"/>
</dbReference>
<dbReference type="RefSeq" id="NP_389145.1">
    <property type="nucleotide sequence ID" value="NC_000964.3"/>
</dbReference>
<dbReference type="RefSeq" id="WP_003245226.1">
    <property type="nucleotide sequence ID" value="NZ_OZ025638.1"/>
</dbReference>
<dbReference type="FunCoup" id="P54329">
    <property type="interactions" value="40"/>
</dbReference>
<dbReference type="STRING" id="224308.BSU12630"/>
<dbReference type="PaxDb" id="224308-BSU12630"/>
<dbReference type="EnsemblBacteria" id="CAB13120">
    <property type="protein sequence ID" value="CAB13120"/>
    <property type="gene ID" value="BSU_12630"/>
</dbReference>
<dbReference type="GeneID" id="939425"/>
<dbReference type="KEGG" id="bsu:BSU12630"/>
<dbReference type="PATRIC" id="fig|224308.179.peg.1368"/>
<dbReference type="eggNOG" id="ENOG5030H1B">
    <property type="taxonomic scope" value="Bacteria"/>
</dbReference>
<dbReference type="InParanoid" id="P54329"/>
<dbReference type="OrthoDB" id="2871348at2"/>
<dbReference type="BioCyc" id="BSUB:BSU12630-MONOMER"/>
<dbReference type="Proteomes" id="UP000001570">
    <property type="component" value="Chromosome"/>
</dbReference>
<dbReference type="InterPro" id="IPR010064">
    <property type="entry name" value="HK97-gp10_tail"/>
</dbReference>
<dbReference type="Pfam" id="PF04883">
    <property type="entry name" value="HK97-gp10_like"/>
    <property type="match status" value="1"/>
</dbReference>
<comment type="similarity">
    <text evidence="1">To B.subtilis YqbI.</text>
</comment>
<gene>
    <name type="primary">xkdI</name>
    <name type="ordered locus">BSU12630</name>
</gene>
<proteinExistence type="predicted"/>
<organism>
    <name type="scientific">Bacillus subtilis (strain 168)</name>
    <dbReference type="NCBI Taxonomy" id="224308"/>
    <lineage>
        <taxon>Bacteria</taxon>
        <taxon>Bacillati</taxon>
        <taxon>Bacillota</taxon>
        <taxon>Bacilli</taxon>
        <taxon>Bacillales</taxon>
        <taxon>Bacillaceae</taxon>
        <taxon>Bacillus</taxon>
    </lineage>
</organism>
<sequence length="161" mass="18262">MKIAGLKQLNTALKEAASGGFSRQASRWLEECGQDFLEIVQSELISTQTIDTEKLLSSFEKGAEDNLWIVQSGGLSLEVGTQLDYASFLNDGHWTSKQDVRWVPGRFQGSRFIYDPAASTGMALKRKWIPGTGYWDHALLLYEQLFEKSLESKLRQWLKKL</sequence>
<evidence type="ECO:0000305" key="1"/>
<feature type="chain" id="PRO_0000066023" description="Phage-like element PBSX protein XkdI">
    <location>
        <begin position="1"/>
        <end position="161"/>
    </location>
</feature>
<keyword id="KW-1185">Reference proteome</keyword>